<accession>Q84BU5</accession>
<accession>Q5FJP3</accession>
<accession>Q93G05</accession>
<evidence type="ECO:0000255" key="1">
    <source>
        <dbReference type="HAMAP-Rule" id="MF_01151"/>
    </source>
</evidence>
<evidence type="ECO:0000256" key="2">
    <source>
        <dbReference type="SAM" id="MobiDB-lite"/>
    </source>
</evidence>
<evidence type="ECO:0000305" key="3"/>
<proteinExistence type="inferred from homology"/>
<keyword id="KW-0143">Chaperone</keyword>
<keyword id="KW-0963">Cytoplasm</keyword>
<keyword id="KW-1185">Reference proteome</keyword>
<keyword id="KW-0346">Stress response</keyword>
<reference key="1">
    <citation type="submission" date="2000-08" db="EMBL/GenBank/DDBJ databases">
        <title>Molecular characterization of the dnaK operon of Lactobacillus acidophilus CRL 639.</title>
        <authorList>
            <person name="Lorca G.L."/>
            <person name="Raya R.R."/>
            <person name="Font de Valdez G."/>
        </authorList>
    </citation>
    <scope>NUCLEOTIDE SEQUENCE [GENOMIC DNA]</scope>
    <source>
        <strain>CRL 639</strain>
    </source>
</reference>
<reference key="2">
    <citation type="submission" date="2001-04" db="EMBL/GenBank/DDBJ databases">
        <title>Characterization of Lactobacillus acidophilus dnaK.</title>
        <authorList>
            <person name="Aoyama K."/>
            <person name="Uenishi H."/>
            <person name="Nakajima H."/>
        </authorList>
    </citation>
    <scope>NUCLEOTIDE SEQUENCE [GENOMIC DNA]</scope>
    <source>
        <strain>SBT2062</strain>
    </source>
</reference>
<reference key="3">
    <citation type="journal article" date="2005" name="Proc. Natl. Acad. Sci. U.S.A.">
        <title>Complete genome sequence of the probiotic lactic acid bacterium Lactobacillus acidophilus NCFM.</title>
        <authorList>
            <person name="Altermann E."/>
            <person name="Russell W.M."/>
            <person name="Azcarate-Peril M.A."/>
            <person name="Barrangou R."/>
            <person name="Buck B.L."/>
            <person name="McAuliffe O."/>
            <person name="Souther N."/>
            <person name="Dobson A."/>
            <person name="Duong T."/>
            <person name="Callanan M."/>
            <person name="Lick S."/>
            <person name="Hamrick A."/>
            <person name="Cano R."/>
            <person name="Klaenhammer T.R."/>
        </authorList>
    </citation>
    <scope>NUCLEOTIDE SEQUENCE [LARGE SCALE GENOMIC DNA]</scope>
    <source>
        <strain>ATCC 700396 / NCK56 / N2 / NCFM</strain>
    </source>
</reference>
<name>GRPE_LACAC</name>
<organism>
    <name type="scientific">Lactobacillus acidophilus (strain ATCC 700396 / NCK56 / N2 / NCFM)</name>
    <dbReference type="NCBI Taxonomy" id="272621"/>
    <lineage>
        <taxon>Bacteria</taxon>
        <taxon>Bacillati</taxon>
        <taxon>Bacillota</taxon>
        <taxon>Bacilli</taxon>
        <taxon>Lactobacillales</taxon>
        <taxon>Lactobacillaceae</taxon>
        <taxon>Lactobacillus</taxon>
    </lineage>
</organism>
<comment type="function">
    <text evidence="1">Participates actively in the response to hyperosmotic and heat shock by preventing the aggregation of stress-denatured proteins, in association with DnaK and GrpE. It is the nucleotide exchange factor for DnaK and may function as a thermosensor. Unfolded proteins bind initially to DnaJ; upon interaction with the DnaJ-bound protein, DnaK hydrolyzes its bound ATP, resulting in the formation of a stable complex. GrpE releases ADP from DnaK; ATP binding to DnaK triggers the release of the substrate protein, thus completing the reaction cycle. Several rounds of ATP-dependent interactions between DnaJ, DnaK and GrpE are required for fully efficient folding.</text>
</comment>
<comment type="subunit">
    <text evidence="1">Homodimer.</text>
</comment>
<comment type="subcellular location">
    <subcellularLocation>
        <location evidence="1">Cytoplasm</location>
    </subcellularLocation>
</comment>
<comment type="similarity">
    <text evidence="1">Belongs to the GrpE family.</text>
</comment>
<dbReference type="EMBL" id="AF300646">
    <property type="protein sequence ID" value="AAK97220.1"/>
    <property type="molecule type" value="Genomic_DNA"/>
</dbReference>
<dbReference type="EMBL" id="AB059359">
    <property type="protein sequence ID" value="BAC66859.1"/>
    <property type="molecule type" value="Genomic_DNA"/>
</dbReference>
<dbReference type="EMBL" id="CP000033">
    <property type="protein sequence ID" value="AAV43081.1"/>
    <property type="molecule type" value="Genomic_DNA"/>
</dbReference>
<dbReference type="RefSeq" id="WP_003547792.1">
    <property type="nucleotide sequence ID" value="NC_006814.3"/>
</dbReference>
<dbReference type="RefSeq" id="YP_194112.1">
    <property type="nucleotide sequence ID" value="NC_006814.3"/>
</dbReference>
<dbReference type="SMR" id="Q84BU5"/>
<dbReference type="STRING" id="272621.LBA1248"/>
<dbReference type="GeneID" id="93289661"/>
<dbReference type="KEGG" id="lac:LBA1248"/>
<dbReference type="PATRIC" id="fig|272621.13.peg.1183"/>
<dbReference type="eggNOG" id="COG0576">
    <property type="taxonomic scope" value="Bacteria"/>
</dbReference>
<dbReference type="HOGENOM" id="CLU_057217_6_3_9"/>
<dbReference type="OrthoDB" id="9812586at2"/>
<dbReference type="BioCyc" id="LACI272621:G1G49-1231-MONOMER"/>
<dbReference type="Proteomes" id="UP000006381">
    <property type="component" value="Chromosome"/>
</dbReference>
<dbReference type="GO" id="GO:0005737">
    <property type="term" value="C:cytoplasm"/>
    <property type="evidence" value="ECO:0007669"/>
    <property type="project" value="UniProtKB-SubCell"/>
</dbReference>
<dbReference type="GO" id="GO:0000774">
    <property type="term" value="F:adenyl-nucleotide exchange factor activity"/>
    <property type="evidence" value="ECO:0007669"/>
    <property type="project" value="InterPro"/>
</dbReference>
<dbReference type="GO" id="GO:0042803">
    <property type="term" value="F:protein homodimerization activity"/>
    <property type="evidence" value="ECO:0007669"/>
    <property type="project" value="InterPro"/>
</dbReference>
<dbReference type="GO" id="GO:0051087">
    <property type="term" value="F:protein-folding chaperone binding"/>
    <property type="evidence" value="ECO:0007669"/>
    <property type="project" value="InterPro"/>
</dbReference>
<dbReference type="GO" id="GO:0051082">
    <property type="term" value="F:unfolded protein binding"/>
    <property type="evidence" value="ECO:0007669"/>
    <property type="project" value="TreeGrafter"/>
</dbReference>
<dbReference type="GO" id="GO:0006457">
    <property type="term" value="P:protein folding"/>
    <property type="evidence" value="ECO:0007669"/>
    <property type="project" value="InterPro"/>
</dbReference>
<dbReference type="CDD" id="cd00446">
    <property type="entry name" value="GrpE"/>
    <property type="match status" value="1"/>
</dbReference>
<dbReference type="FunFam" id="2.30.22.10:FF:000001">
    <property type="entry name" value="Protein GrpE"/>
    <property type="match status" value="1"/>
</dbReference>
<dbReference type="Gene3D" id="3.90.20.20">
    <property type="match status" value="1"/>
</dbReference>
<dbReference type="Gene3D" id="2.30.22.10">
    <property type="entry name" value="Head domain of nucleotide exchange factor GrpE"/>
    <property type="match status" value="1"/>
</dbReference>
<dbReference type="HAMAP" id="MF_01151">
    <property type="entry name" value="GrpE"/>
    <property type="match status" value="1"/>
</dbReference>
<dbReference type="InterPro" id="IPR000740">
    <property type="entry name" value="GrpE"/>
</dbReference>
<dbReference type="InterPro" id="IPR013805">
    <property type="entry name" value="GrpE_coiled_coil"/>
</dbReference>
<dbReference type="InterPro" id="IPR009012">
    <property type="entry name" value="GrpE_head"/>
</dbReference>
<dbReference type="NCBIfam" id="NF010738">
    <property type="entry name" value="PRK14140.1"/>
    <property type="match status" value="1"/>
</dbReference>
<dbReference type="NCBIfam" id="NF010759">
    <property type="entry name" value="PRK14162.1"/>
    <property type="match status" value="1"/>
</dbReference>
<dbReference type="PANTHER" id="PTHR21237">
    <property type="entry name" value="GRPE PROTEIN"/>
    <property type="match status" value="1"/>
</dbReference>
<dbReference type="PANTHER" id="PTHR21237:SF23">
    <property type="entry name" value="GRPE PROTEIN HOMOLOG, MITOCHONDRIAL"/>
    <property type="match status" value="1"/>
</dbReference>
<dbReference type="Pfam" id="PF01025">
    <property type="entry name" value="GrpE"/>
    <property type="match status" value="1"/>
</dbReference>
<dbReference type="PRINTS" id="PR00773">
    <property type="entry name" value="GRPEPROTEIN"/>
</dbReference>
<dbReference type="SUPFAM" id="SSF58014">
    <property type="entry name" value="Coiled-coil domain of nucleotide exchange factor GrpE"/>
    <property type="match status" value="1"/>
</dbReference>
<dbReference type="SUPFAM" id="SSF51064">
    <property type="entry name" value="Head domain of nucleotide exchange factor GrpE"/>
    <property type="match status" value="1"/>
</dbReference>
<dbReference type="PROSITE" id="PS01071">
    <property type="entry name" value="GRPE"/>
    <property type="match status" value="1"/>
</dbReference>
<protein>
    <recommendedName>
        <fullName evidence="1">Protein GrpE</fullName>
    </recommendedName>
    <alternativeName>
        <fullName evidence="1">HSP-70 cofactor</fullName>
    </alternativeName>
</protein>
<sequence length="194" mass="22058">MSKEEFPSEKNLDKEENTSKPKKAVKKEAAKGEETKKNNENQKLAKEIADLKEKNKDLEDKYLRSEAEIQNMQNRYTKERAQLIKYESQSLAKDVLPAMDNLERALSVEADDDVSKQLKKGVQMTLDALVKAMKDHGVVEIEADGVKFDPTLHQAVQTVAAENDDQKDHVVQVLQKGYQYKDRTLRPAMVVVAQ</sequence>
<gene>
    <name evidence="1" type="primary">grpE</name>
    <name type="ordered locus">LBA1248</name>
</gene>
<feature type="chain" id="PRO_0000113797" description="Protein GrpE">
    <location>
        <begin position="1"/>
        <end position="194"/>
    </location>
</feature>
<feature type="region of interest" description="Disordered" evidence="2">
    <location>
        <begin position="1"/>
        <end position="44"/>
    </location>
</feature>
<feature type="compositionally biased region" description="Basic and acidic residues" evidence="2">
    <location>
        <begin position="1"/>
        <end position="19"/>
    </location>
</feature>
<feature type="compositionally biased region" description="Basic and acidic residues" evidence="2">
    <location>
        <begin position="26"/>
        <end position="44"/>
    </location>
</feature>
<feature type="sequence conflict" description="In Ref. 1; AAK97220." evidence="3" ref="1">
    <original>D</original>
    <variation>E</variation>
    <location>
        <position position="112"/>
    </location>
</feature>
<feature type="sequence conflict" description="In Ref. 1; AAK97220." evidence="3" ref="1">
    <original>QLKKGV</original>
    <variation>PIEKGF</variation>
    <location>
        <begin position="117"/>
        <end position="122"/>
    </location>
</feature>
<feature type="sequence conflict" description="In Ref. 1; AAK97220." evidence="3" ref="1">
    <original>HG</original>
    <variation>SR</variation>
    <location>
        <begin position="136"/>
        <end position="137"/>
    </location>
</feature>
<feature type="sequence conflict" description="In Ref. 1; AAK97220." evidence="3" ref="1">
    <original>ENDDQKDH</original>
    <variation>DDDQKDHT</variation>
    <location>
        <begin position="162"/>
        <end position="169"/>
    </location>
</feature>